<keyword id="KW-0004">4Fe-4S</keyword>
<keyword id="KW-0408">Iron</keyword>
<keyword id="KW-0411">Iron-sulfur</keyword>
<keyword id="KW-0456">Lyase</keyword>
<keyword id="KW-0479">Metal-binding</keyword>
<keyword id="KW-0949">S-adenosyl-L-methionine</keyword>
<keyword id="KW-0784">Thiamine biosynthesis</keyword>
<keyword id="KW-0862">Zinc</keyword>
<feature type="chain" id="PRO_1000198044" description="Phosphomethylpyrimidine synthase">
    <location>
        <begin position="1"/>
        <end position="586"/>
    </location>
</feature>
<feature type="region of interest" description="Disordered" evidence="2">
    <location>
        <begin position="1"/>
        <end position="59"/>
    </location>
</feature>
<feature type="compositionally biased region" description="Basic and acidic residues" evidence="2">
    <location>
        <begin position="22"/>
        <end position="39"/>
    </location>
</feature>
<feature type="binding site" evidence="1">
    <location>
        <position position="193"/>
    </location>
    <ligand>
        <name>substrate</name>
    </ligand>
</feature>
<feature type="binding site" evidence="1">
    <location>
        <position position="222"/>
    </location>
    <ligand>
        <name>substrate</name>
    </ligand>
</feature>
<feature type="binding site" evidence="1">
    <location>
        <position position="251"/>
    </location>
    <ligand>
        <name>substrate</name>
    </ligand>
</feature>
<feature type="binding site" evidence="1">
    <location>
        <position position="287"/>
    </location>
    <ligand>
        <name>substrate</name>
    </ligand>
</feature>
<feature type="binding site" evidence="1">
    <location>
        <begin position="307"/>
        <end position="309"/>
    </location>
    <ligand>
        <name>substrate</name>
    </ligand>
</feature>
<feature type="binding site" evidence="1">
    <location>
        <begin position="348"/>
        <end position="351"/>
    </location>
    <ligand>
        <name>substrate</name>
    </ligand>
</feature>
<feature type="binding site" evidence="1">
    <location>
        <position position="387"/>
    </location>
    <ligand>
        <name>substrate</name>
    </ligand>
</feature>
<feature type="binding site" evidence="1">
    <location>
        <position position="391"/>
    </location>
    <ligand>
        <name>Zn(2+)</name>
        <dbReference type="ChEBI" id="CHEBI:29105"/>
    </ligand>
</feature>
<feature type="binding site" evidence="1">
    <location>
        <position position="414"/>
    </location>
    <ligand>
        <name>substrate</name>
    </ligand>
</feature>
<feature type="binding site" evidence="1">
    <location>
        <position position="455"/>
    </location>
    <ligand>
        <name>Zn(2+)</name>
        <dbReference type="ChEBI" id="CHEBI:29105"/>
    </ligand>
</feature>
<feature type="binding site" evidence="1">
    <location>
        <position position="535"/>
    </location>
    <ligand>
        <name>[4Fe-4S] cluster</name>
        <dbReference type="ChEBI" id="CHEBI:49883"/>
        <note>4Fe-4S-S-AdoMet</note>
    </ligand>
</feature>
<feature type="binding site" evidence="1">
    <location>
        <position position="538"/>
    </location>
    <ligand>
        <name>[4Fe-4S] cluster</name>
        <dbReference type="ChEBI" id="CHEBI:49883"/>
        <note>4Fe-4S-S-AdoMet</note>
    </ligand>
</feature>
<feature type="binding site" evidence="1">
    <location>
        <position position="543"/>
    </location>
    <ligand>
        <name>[4Fe-4S] cluster</name>
        <dbReference type="ChEBI" id="CHEBI:49883"/>
        <note>4Fe-4S-S-AdoMet</note>
    </ligand>
</feature>
<evidence type="ECO:0000255" key="1">
    <source>
        <dbReference type="HAMAP-Rule" id="MF_00089"/>
    </source>
</evidence>
<evidence type="ECO:0000256" key="2">
    <source>
        <dbReference type="SAM" id="MobiDB-lite"/>
    </source>
</evidence>
<accession>B7HX62</accession>
<comment type="function">
    <text evidence="1">Catalyzes the synthesis of the hydroxymethylpyrimidine phosphate (HMP-P) moiety of thiamine from aminoimidazole ribotide (AIR) in a radical S-adenosyl-L-methionine (SAM)-dependent reaction.</text>
</comment>
<comment type="catalytic activity">
    <reaction evidence="1">
        <text>5-amino-1-(5-phospho-beta-D-ribosyl)imidazole + S-adenosyl-L-methionine = 4-amino-2-methyl-5-(phosphooxymethyl)pyrimidine + CO + 5'-deoxyadenosine + formate + L-methionine + 3 H(+)</text>
        <dbReference type="Rhea" id="RHEA:24840"/>
        <dbReference type="ChEBI" id="CHEBI:15378"/>
        <dbReference type="ChEBI" id="CHEBI:15740"/>
        <dbReference type="ChEBI" id="CHEBI:17245"/>
        <dbReference type="ChEBI" id="CHEBI:17319"/>
        <dbReference type="ChEBI" id="CHEBI:57844"/>
        <dbReference type="ChEBI" id="CHEBI:58354"/>
        <dbReference type="ChEBI" id="CHEBI:59789"/>
        <dbReference type="ChEBI" id="CHEBI:137981"/>
        <dbReference type="EC" id="4.1.99.17"/>
    </reaction>
</comment>
<comment type="cofactor">
    <cofactor evidence="1">
        <name>[4Fe-4S] cluster</name>
        <dbReference type="ChEBI" id="CHEBI:49883"/>
    </cofactor>
    <text evidence="1">Binds 1 [4Fe-4S] cluster per subunit. The cluster is coordinated with 3 cysteines and an exchangeable S-adenosyl-L-methionine.</text>
</comment>
<comment type="pathway">
    <text evidence="1">Cofactor biosynthesis; thiamine diphosphate biosynthesis.</text>
</comment>
<comment type="similarity">
    <text evidence="1">Belongs to the ThiC family.</text>
</comment>
<name>THIC_BACC7</name>
<sequence length="586" mass="65771">MKQSVSAEQIELKSSLPGSKKVYVDGPREGMKVPMREIEQSDTNGVPNPPIRVYDTSGPYTDPAYKVELEKGIPTPRHSWILERGDVEAYEGREVKPEDDGVKVASKHTPVFPQMDRKPLRAKQGANVTQMHYARNGIITSEMEYVAIREGVEPEFVRKEIAEGRAILPANINHPEAEPMIIGRNFHVKVNANIGNSAVSSSIAEEVEKMTWATRWGADTIMDLSTGKNIHTTREWIIRNAPVPVGTVPIYQALEKVNGIAEDLTWEVYRDTLIEQAEQGVDYFTIHAGVLLRYIPITAKRTTGIVSRGGSIMAQWCLFHHKENFLYTHFEEICEIMKQYDVSFSLGDGLRPGSIADANDEAQFSELETLGELTKIAWKHDVQVMIEGPGHVPMHLIKENMEKELDICQGAPFYTLGPLTTDIAPGYDHITSAIGAAMIGWFGTAMLCYVTPKEHLGLPNKDDVREGVITYKIAAHAADLAKGHKTAHQRDDALSKARFEFRWRDQFNLSLDPERAMEYHDETLPAEGAKTAHFCSMCGPKFCSMRISHDIREYAKENDLETTEAIEKGMKEKAKEFKDTGSHLYQ</sequence>
<organism>
    <name type="scientific">Bacillus cereus (strain AH187)</name>
    <dbReference type="NCBI Taxonomy" id="405534"/>
    <lineage>
        <taxon>Bacteria</taxon>
        <taxon>Bacillati</taxon>
        <taxon>Bacillota</taxon>
        <taxon>Bacilli</taxon>
        <taxon>Bacillales</taxon>
        <taxon>Bacillaceae</taxon>
        <taxon>Bacillus</taxon>
        <taxon>Bacillus cereus group</taxon>
    </lineage>
</organism>
<protein>
    <recommendedName>
        <fullName evidence="1">Phosphomethylpyrimidine synthase</fullName>
        <ecNumber evidence="1">4.1.99.17</ecNumber>
    </recommendedName>
    <alternativeName>
        <fullName evidence="1">Hydroxymethylpyrimidine phosphate synthase</fullName>
        <shortName evidence="1">HMP-P synthase</shortName>
        <shortName evidence="1">HMP-phosphate synthase</shortName>
        <shortName evidence="1">HMPP synthase</shortName>
    </alternativeName>
    <alternativeName>
        <fullName evidence="1">Thiamine biosynthesis protein ThiC</fullName>
    </alternativeName>
</protein>
<reference key="1">
    <citation type="submission" date="2008-10" db="EMBL/GenBank/DDBJ databases">
        <title>Genome sequence of Bacillus cereus AH187.</title>
        <authorList>
            <person name="Dodson R.J."/>
            <person name="Durkin A.S."/>
            <person name="Rosovitz M.J."/>
            <person name="Rasko D.A."/>
            <person name="Kolsto A.B."/>
            <person name="Okstad O.A."/>
            <person name="Ravel J."/>
            <person name="Sutton G."/>
        </authorList>
    </citation>
    <scope>NUCLEOTIDE SEQUENCE [LARGE SCALE GENOMIC DNA]</scope>
    <source>
        <strain>AH187</strain>
    </source>
</reference>
<gene>
    <name evidence="1" type="primary">thiC</name>
    <name type="ordered locus">BCAH187_A5398</name>
</gene>
<dbReference type="EC" id="4.1.99.17" evidence="1"/>
<dbReference type="EMBL" id="CP001177">
    <property type="protein sequence ID" value="ACJ79884.1"/>
    <property type="molecule type" value="Genomic_DNA"/>
</dbReference>
<dbReference type="SMR" id="B7HX62"/>
<dbReference type="KEGG" id="bcr:BCAH187_A5398"/>
<dbReference type="HOGENOM" id="CLU_013181_2_1_9"/>
<dbReference type="UniPathway" id="UPA00060"/>
<dbReference type="Proteomes" id="UP000002214">
    <property type="component" value="Chromosome"/>
</dbReference>
<dbReference type="GO" id="GO:0005829">
    <property type="term" value="C:cytosol"/>
    <property type="evidence" value="ECO:0007669"/>
    <property type="project" value="TreeGrafter"/>
</dbReference>
<dbReference type="GO" id="GO:0051539">
    <property type="term" value="F:4 iron, 4 sulfur cluster binding"/>
    <property type="evidence" value="ECO:0007669"/>
    <property type="project" value="UniProtKB-KW"/>
</dbReference>
<dbReference type="GO" id="GO:0016830">
    <property type="term" value="F:carbon-carbon lyase activity"/>
    <property type="evidence" value="ECO:0007669"/>
    <property type="project" value="InterPro"/>
</dbReference>
<dbReference type="GO" id="GO:0008270">
    <property type="term" value="F:zinc ion binding"/>
    <property type="evidence" value="ECO:0007669"/>
    <property type="project" value="UniProtKB-UniRule"/>
</dbReference>
<dbReference type="GO" id="GO:0009228">
    <property type="term" value="P:thiamine biosynthetic process"/>
    <property type="evidence" value="ECO:0007669"/>
    <property type="project" value="UniProtKB-KW"/>
</dbReference>
<dbReference type="GO" id="GO:0009229">
    <property type="term" value="P:thiamine diphosphate biosynthetic process"/>
    <property type="evidence" value="ECO:0007669"/>
    <property type="project" value="UniProtKB-UniRule"/>
</dbReference>
<dbReference type="FunFam" id="3.20.20.540:FF:000001">
    <property type="entry name" value="Phosphomethylpyrimidine synthase"/>
    <property type="match status" value="1"/>
</dbReference>
<dbReference type="Gene3D" id="6.10.250.620">
    <property type="match status" value="1"/>
</dbReference>
<dbReference type="Gene3D" id="3.20.20.540">
    <property type="entry name" value="Radical SAM ThiC family, central domain"/>
    <property type="match status" value="1"/>
</dbReference>
<dbReference type="HAMAP" id="MF_00089">
    <property type="entry name" value="ThiC"/>
    <property type="match status" value="1"/>
</dbReference>
<dbReference type="InterPro" id="IPR037509">
    <property type="entry name" value="ThiC"/>
</dbReference>
<dbReference type="InterPro" id="IPR025747">
    <property type="entry name" value="ThiC-associated_dom"/>
</dbReference>
<dbReference type="InterPro" id="IPR038521">
    <property type="entry name" value="ThiC/Bza_core_dom"/>
</dbReference>
<dbReference type="InterPro" id="IPR002817">
    <property type="entry name" value="ThiC/BzaA/B"/>
</dbReference>
<dbReference type="NCBIfam" id="NF006763">
    <property type="entry name" value="PRK09284.1"/>
    <property type="match status" value="1"/>
</dbReference>
<dbReference type="NCBIfam" id="NF009895">
    <property type="entry name" value="PRK13352.1"/>
    <property type="match status" value="1"/>
</dbReference>
<dbReference type="NCBIfam" id="TIGR00190">
    <property type="entry name" value="thiC"/>
    <property type="match status" value="1"/>
</dbReference>
<dbReference type="PANTHER" id="PTHR30557:SF1">
    <property type="entry name" value="PHOSPHOMETHYLPYRIMIDINE SYNTHASE, CHLOROPLASTIC"/>
    <property type="match status" value="1"/>
</dbReference>
<dbReference type="PANTHER" id="PTHR30557">
    <property type="entry name" value="THIAMINE BIOSYNTHESIS PROTEIN THIC"/>
    <property type="match status" value="1"/>
</dbReference>
<dbReference type="Pfam" id="PF13667">
    <property type="entry name" value="ThiC-associated"/>
    <property type="match status" value="1"/>
</dbReference>
<dbReference type="Pfam" id="PF01964">
    <property type="entry name" value="ThiC_Rad_SAM"/>
    <property type="match status" value="1"/>
</dbReference>
<dbReference type="SFLD" id="SFLDF00407">
    <property type="entry name" value="phosphomethylpyrimidine_syntha"/>
    <property type="match status" value="1"/>
</dbReference>
<dbReference type="SFLD" id="SFLDG01114">
    <property type="entry name" value="phosphomethylpyrimidine_syntha"/>
    <property type="match status" value="1"/>
</dbReference>
<dbReference type="SFLD" id="SFLDS00113">
    <property type="entry name" value="Radical_SAM_Phosphomethylpyrim"/>
    <property type="match status" value="1"/>
</dbReference>
<proteinExistence type="inferred from homology"/>